<name>IOLG_ACIC1</name>
<dbReference type="EC" id="1.1.1.18" evidence="1"/>
<dbReference type="EMBL" id="CP000481">
    <property type="protein sequence ID" value="ABK53581.1"/>
    <property type="molecule type" value="Genomic_DNA"/>
</dbReference>
<dbReference type="RefSeq" id="WP_011720644.1">
    <property type="nucleotide sequence ID" value="NC_008578.1"/>
</dbReference>
<dbReference type="SMR" id="A0LVX1"/>
<dbReference type="STRING" id="351607.Acel_1809"/>
<dbReference type="KEGG" id="ace:Acel_1809"/>
<dbReference type="eggNOG" id="COG0673">
    <property type="taxonomic scope" value="Bacteria"/>
</dbReference>
<dbReference type="HOGENOM" id="CLU_023194_0_1_11"/>
<dbReference type="InParanoid" id="A0LVX1"/>
<dbReference type="OrthoDB" id="256869at2"/>
<dbReference type="Proteomes" id="UP000008221">
    <property type="component" value="Chromosome"/>
</dbReference>
<dbReference type="GO" id="GO:0050112">
    <property type="term" value="F:inositol 2-dehydrogenase (NAD+) activity"/>
    <property type="evidence" value="ECO:0007669"/>
    <property type="project" value="UniProtKB-UniRule"/>
</dbReference>
<dbReference type="GO" id="GO:0000166">
    <property type="term" value="F:nucleotide binding"/>
    <property type="evidence" value="ECO:0007669"/>
    <property type="project" value="InterPro"/>
</dbReference>
<dbReference type="GO" id="GO:0019310">
    <property type="term" value="P:inositol catabolic process"/>
    <property type="evidence" value="ECO:0007669"/>
    <property type="project" value="UniProtKB-UniRule"/>
</dbReference>
<dbReference type="Gene3D" id="3.30.360.10">
    <property type="entry name" value="Dihydrodipicolinate Reductase, domain 2"/>
    <property type="match status" value="1"/>
</dbReference>
<dbReference type="Gene3D" id="3.40.50.720">
    <property type="entry name" value="NAD(P)-binding Rossmann-like Domain"/>
    <property type="match status" value="1"/>
</dbReference>
<dbReference type="HAMAP" id="MF_01671">
    <property type="entry name" value="IolG"/>
    <property type="match status" value="1"/>
</dbReference>
<dbReference type="InterPro" id="IPR050424">
    <property type="entry name" value="Gfo-Idh-MocA_inositol_DH"/>
</dbReference>
<dbReference type="InterPro" id="IPR004104">
    <property type="entry name" value="Gfo/Idh/MocA-like_OxRdtase_C"/>
</dbReference>
<dbReference type="InterPro" id="IPR000683">
    <property type="entry name" value="Gfo/Idh/MocA-like_OxRdtase_N"/>
</dbReference>
<dbReference type="InterPro" id="IPR023794">
    <property type="entry name" value="MI/DCI_dehydrogenase"/>
</dbReference>
<dbReference type="InterPro" id="IPR036291">
    <property type="entry name" value="NAD(P)-bd_dom_sf"/>
</dbReference>
<dbReference type="PANTHER" id="PTHR43593">
    <property type="match status" value="1"/>
</dbReference>
<dbReference type="PANTHER" id="PTHR43593:SF1">
    <property type="entry name" value="INOSITOL 2-DEHYDROGENASE"/>
    <property type="match status" value="1"/>
</dbReference>
<dbReference type="Pfam" id="PF01408">
    <property type="entry name" value="GFO_IDH_MocA"/>
    <property type="match status" value="1"/>
</dbReference>
<dbReference type="Pfam" id="PF02894">
    <property type="entry name" value="GFO_IDH_MocA_C"/>
    <property type="match status" value="1"/>
</dbReference>
<dbReference type="SUPFAM" id="SSF55347">
    <property type="entry name" value="Glyceraldehyde-3-phosphate dehydrogenase-like, C-terminal domain"/>
    <property type="match status" value="1"/>
</dbReference>
<dbReference type="SUPFAM" id="SSF51735">
    <property type="entry name" value="NAD(P)-binding Rossmann-fold domains"/>
    <property type="match status" value="1"/>
</dbReference>
<keyword id="KW-0520">NAD</keyword>
<keyword id="KW-0560">Oxidoreductase</keyword>
<keyword id="KW-1185">Reference proteome</keyword>
<feature type="chain" id="PRO_0000352549" description="Inositol 2-dehydrogenase">
    <location>
        <begin position="1"/>
        <end position="341"/>
    </location>
</feature>
<reference key="1">
    <citation type="journal article" date="2009" name="Genome Res.">
        <title>Complete genome of the cellulolytic thermophile Acidothermus cellulolyticus 11B provides insights into its ecophysiological and evolutionary adaptations.</title>
        <authorList>
            <person name="Barabote R.D."/>
            <person name="Xie G."/>
            <person name="Leu D.H."/>
            <person name="Normand P."/>
            <person name="Necsulea A."/>
            <person name="Daubin V."/>
            <person name="Medigue C."/>
            <person name="Adney W.S."/>
            <person name="Xu X.C."/>
            <person name="Lapidus A."/>
            <person name="Parales R.E."/>
            <person name="Detter C."/>
            <person name="Pujic P."/>
            <person name="Bruce D."/>
            <person name="Lavire C."/>
            <person name="Challacombe J.F."/>
            <person name="Brettin T.S."/>
            <person name="Berry A.M."/>
        </authorList>
    </citation>
    <scope>NUCLEOTIDE SEQUENCE [LARGE SCALE GENOMIC DNA]</scope>
    <source>
        <strain>ATCC 43068 / DSM 8971 / 11B</strain>
    </source>
</reference>
<accession>A0LVX1</accession>
<organism>
    <name type="scientific">Acidothermus cellulolyticus (strain ATCC 43068 / DSM 8971 / 11B)</name>
    <dbReference type="NCBI Taxonomy" id="351607"/>
    <lineage>
        <taxon>Bacteria</taxon>
        <taxon>Bacillati</taxon>
        <taxon>Actinomycetota</taxon>
        <taxon>Actinomycetes</taxon>
        <taxon>Acidothermales</taxon>
        <taxon>Acidothermaceae</taxon>
        <taxon>Acidothermus</taxon>
    </lineage>
</organism>
<evidence type="ECO:0000255" key="1">
    <source>
        <dbReference type="HAMAP-Rule" id="MF_01671"/>
    </source>
</evidence>
<gene>
    <name evidence="1" type="primary">iolG</name>
    <name type="ordered locus">Acel_1809</name>
</gene>
<sequence length="341" mass="36761">MATDRSVRIGLIGAGAIGEDHARRLSTVIRGADVVAVHDVDPSRAKTVATRFRDARVIPDGNSLIGDPDVDAVVVASAAPTHEAYVLAAIAARKPVFCEKPLATTAAGCLRIVEAEKAHGRRFVRVGFMRRFDPAYLGLKAELRSGAIGHPLLAHLAHRNPAVPSTLRTTDAIADSLVHEMDLVRWLFDTEIREVRAVAGRRNAKAGPDLHDPLLVLVRMATDVVVDVELSLNIGYGYHIRAEIVGENGTVALASEQPIVRRISGEERRPVAQHWKTRFAAAYDAELSEWVRDVSQGRVSGPSAWDGYAATLATDAAAESLRSDTAVAAFPGDVPTLYREP</sequence>
<protein>
    <recommendedName>
        <fullName evidence="1">Inositol 2-dehydrogenase</fullName>
        <ecNumber evidence="1">1.1.1.18</ecNumber>
    </recommendedName>
    <alternativeName>
        <fullName evidence="1">Myo-inositol 2-dehydrogenase</fullName>
        <shortName evidence="1">MI 2-dehydrogenase</shortName>
    </alternativeName>
</protein>
<proteinExistence type="inferred from homology"/>
<comment type="function">
    <text evidence="1">Involved in the oxidation of myo-inositol (MI) to 2-keto-myo-inositol (2KMI or 2-inosose).</text>
</comment>
<comment type="catalytic activity">
    <reaction evidence="1">
        <text>myo-inositol + NAD(+) = scyllo-inosose + NADH + H(+)</text>
        <dbReference type="Rhea" id="RHEA:16949"/>
        <dbReference type="ChEBI" id="CHEBI:15378"/>
        <dbReference type="ChEBI" id="CHEBI:17268"/>
        <dbReference type="ChEBI" id="CHEBI:17811"/>
        <dbReference type="ChEBI" id="CHEBI:57540"/>
        <dbReference type="ChEBI" id="CHEBI:57945"/>
        <dbReference type="EC" id="1.1.1.18"/>
    </reaction>
</comment>
<comment type="subunit">
    <text evidence="1">Homotetramer.</text>
</comment>
<comment type="similarity">
    <text evidence="1">Belongs to the Gfo/Idh/MocA family.</text>
</comment>